<accession>A9VIR9</accession>
<evidence type="ECO:0000255" key="1">
    <source>
        <dbReference type="HAMAP-Rule" id="MF_01363"/>
    </source>
</evidence>
<evidence type="ECO:0000305" key="2"/>
<sequence>MYAIIETGGKQIKVEAGQAIYIEKLDVEAGETVTFDKVLFVGGENVKVGSPVVEGATVTAKVEKQGRAKKIIVFKYKAKKNNRKKQGHRQPYTKLVVEAINA</sequence>
<comment type="function">
    <text evidence="1">This protein binds to 23S rRNA in the presence of protein L20.</text>
</comment>
<comment type="subunit">
    <text evidence="1">Part of the 50S ribosomal subunit. Contacts protein L20.</text>
</comment>
<comment type="similarity">
    <text evidence="1">Belongs to the bacterial ribosomal protein bL21 family.</text>
</comment>
<proteinExistence type="inferred from homology"/>
<reference key="1">
    <citation type="journal article" date="2008" name="Chem. Biol. Interact.">
        <title>Extending the Bacillus cereus group genomics to putative food-borne pathogens of different toxicity.</title>
        <authorList>
            <person name="Lapidus A."/>
            <person name="Goltsman E."/>
            <person name="Auger S."/>
            <person name="Galleron N."/>
            <person name="Segurens B."/>
            <person name="Dossat C."/>
            <person name="Land M.L."/>
            <person name="Broussolle V."/>
            <person name="Brillard J."/>
            <person name="Guinebretiere M.-H."/>
            <person name="Sanchis V."/>
            <person name="Nguen-the C."/>
            <person name="Lereclus D."/>
            <person name="Richardson P."/>
            <person name="Wincker P."/>
            <person name="Weissenbach J."/>
            <person name="Ehrlich S.D."/>
            <person name="Sorokin A."/>
        </authorList>
    </citation>
    <scope>NUCLEOTIDE SEQUENCE [LARGE SCALE GENOMIC DNA]</scope>
    <source>
        <strain>KBAB4</strain>
    </source>
</reference>
<name>RL21_BACMK</name>
<protein>
    <recommendedName>
        <fullName evidence="1">Large ribosomal subunit protein bL21</fullName>
    </recommendedName>
    <alternativeName>
        <fullName evidence="2">50S ribosomal protein L21</fullName>
    </alternativeName>
</protein>
<gene>
    <name evidence="1" type="primary">rplU</name>
    <name type="ordered locus">BcerKBAB4_4290</name>
</gene>
<organism>
    <name type="scientific">Bacillus mycoides (strain KBAB4)</name>
    <name type="common">Bacillus weihenstephanensis</name>
    <dbReference type="NCBI Taxonomy" id="315730"/>
    <lineage>
        <taxon>Bacteria</taxon>
        <taxon>Bacillati</taxon>
        <taxon>Bacillota</taxon>
        <taxon>Bacilli</taxon>
        <taxon>Bacillales</taxon>
        <taxon>Bacillaceae</taxon>
        <taxon>Bacillus</taxon>
        <taxon>Bacillus cereus group</taxon>
    </lineage>
</organism>
<dbReference type="EMBL" id="CP000903">
    <property type="protein sequence ID" value="ABY45449.1"/>
    <property type="molecule type" value="Genomic_DNA"/>
</dbReference>
<dbReference type="RefSeq" id="WP_000270907.1">
    <property type="nucleotide sequence ID" value="NZ_CAKMRX030000033.1"/>
</dbReference>
<dbReference type="SMR" id="A9VIR9"/>
<dbReference type="GeneID" id="93006656"/>
<dbReference type="KEGG" id="bwe:BcerKBAB4_4290"/>
<dbReference type="eggNOG" id="COG0261">
    <property type="taxonomic scope" value="Bacteria"/>
</dbReference>
<dbReference type="HOGENOM" id="CLU_061463_3_2_9"/>
<dbReference type="Proteomes" id="UP000002154">
    <property type="component" value="Chromosome"/>
</dbReference>
<dbReference type="GO" id="GO:0005737">
    <property type="term" value="C:cytoplasm"/>
    <property type="evidence" value="ECO:0007669"/>
    <property type="project" value="UniProtKB-ARBA"/>
</dbReference>
<dbReference type="GO" id="GO:1990904">
    <property type="term" value="C:ribonucleoprotein complex"/>
    <property type="evidence" value="ECO:0007669"/>
    <property type="project" value="UniProtKB-KW"/>
</dbReference>
<dbReference type="GO" id="GO:0005840">
    <property type="term" value="C:ribosome"/>
    <property type="evidence" value="ECO:0007669"/>
    <property type="project" value="UniProtKB-KW"/>
</dbReference>
<dbReference type="GO" id="GO:0019843">
    <property type="term" value="F:rRNA binding"/>
    <property type="evidence" value="ECO:0007669"/>
    <property type="project" value="UniProtKB-UniRule"/>
</dbReference>
<dbReference type="GO" id="GO:0003735">
    <property type="term" value="F:structural constituent of ribosome"/>
    <property type="evidence" value="ECO:0007669"/>
    <property type="project" value="InterPro"/>
</dbReference>
<dbReference type="GO" id="GO:0006412">
    <property type="term" value="P:translation"/>
    <property type="evidence" value="ECO:0007669"/>
    <property type="project" value="UniProtKB-UniRule"/>
</dbReference>
<dbReference type="HAMAP" id="MF_01363">
    <property type="entry name" value="Ribosomal_bL21"/>
    <property type="match status" value="1"/>
</dbReference>
<dbReference type="InterPro" id="IPR028909">
    <property type="entry name" value="bL21-like"/>
</dbReference>
<dbReference type="InterPro" id="IPR036164">
    <property type="entry name" value="bL21-like_sf"/>
</dbReference>
<dbReference type="InterPro" id="IPR001787">
    <property type="entry name" value="Ribosomal_bL21"/>
</dbReference>
<dbReference type="InterPro" id="IPR018258">
    <property type="entry name" value="Ribosomal_bL21_CS"/>
</dbReference>
<dbReference type="NCBIfam" id="TIGR00061">
    <property type="entry name" value="L21"/>
    <property type="match status" value="1"/>
</dbReference>
<dbReference type="PANTHER" id="PTHR21349">
    <property type="entry name" value="50S RIBOSOMAL PROTEIN L21"/>
    <property type="match status" value="1"/>
</dbReference>
<dbReference type="PANTHER" id="PTHR21349:SF0">
    <property type="entry name" value="LARGE RIBOSOMAL SUBUNIT PROTEIN BL21M"/>
    <property type="match status" value="1"/>
</dbReference>
<dbReference type="Pfam" id="PF00829">
    <property type="entry name" value="Ribosomal_L21p"/>
    <property type="match status" value="1"/>
</dbReference>
<dbReference type="SUPFAM" id="SSF141091">
    <property type="entry name" value="L21p-like"/>
    <property type="match status" value="1"/>
</dbReference>
<dbReference type="PROSITE" id="PS01169">
    <property type="entry name" value="RIBOSOMAL_L21"/>
    <property type="match status" value="1"/>
</dbReference>
<keyword id="KW-0687">Ribonucleoprotein</keyword>
<keyword id="KW-0689">Ribosomal protein</keyword>
<keyword id="KW-0694">RNA-binding</keyword>
<keyword id="KW-0699">rRNA-binding</keyword>
<feature type="chain" id="PRO_1000143757" description="Large ribosomal subunit protein bL21">
    <location>
        <begin position="1"/>
        <end position="102"/>
    </location>
</feature>